<reference key="1">
    <citation type="journal article" date="1996" name="J. Biochem.">
        <title>The virion proteins encoded by bacteriophage phi K and its host-range mutant phi KhT: host-range determination and DNA binding properties.</title>
        <authorList>
            <person name="Kodaira K."/>
            <person name="Oki M."/>
            <person name="Kakikawa M."/>
            <person name="Kimoto H."/>
            <person name="Taketo A."/>
        </authorList>
    </citation>
    <scope>NUCLEOTIDE SEQUENCE [GENOMIC DNA] (PHI-K AND MUTANT PHI KHT)</scope>
</reference>
<reference key="2">
    <citation type="journal article" date="1979" name="J. Biol. Chem.">
        <title>dnaG (primase)-dependent origins of DNA replication. Nucleotide sequences of the negative strand initiation sites of bacteriophages St-1, phi K, and alpha 3.</title>
        <authorList>
            <person name="Sims J."/>
            <person name="Capon D."/>
            <person name="Dressler D."/>
        </authorList>
    </citation>
    <scope>NUCLEOTIDE SEQUENCE OF 1-42</scope>
</reference>
<dbReference type="EMBL" id="X60323">
    <property type="protein sequence ID" value="CAA42893.1"/>
    <property type="molecule type" value="Genomic_DNA"/>
</dbReference>
<dbReference type="EMBL" id="M10726">
    <property type="protein sequence ID" value="AAA32365.1"/>
    <property type="molecule type" value="Genomic_RNA"/>
</dbReference>
<dbReference type="PIR" id="JC4807">
    <property type="entry name" value="JC4807"/>
</dbReference>
<dbReference type="RefSeq" id="NP_043951.1">
    <property type="nucleotide sequence ID" value="NC_001730.1"/>
</dbReference>
<dbReference type="SMR" id="P03649"/>
<dbReference type="TCDB" id="1.K.3.1.2">
    <property type="family name" value="the phix174 tube-forming spike protein h (phix174-h) family"/>
</dbReference>
<dbReference type="GeneID" id="1261201"/>
<dbReference type="KEGG" id="vg:1261201"/>
<dbReference type="Proteomes" id="UP000002122">
    <property type="component" value="Segment"/>
</dbReference>
<dbReference type="GO" id="GO:0019028">
    <property type="term" value="C:viral capsid"/>
    <property type="evidence" value="ECO:0007669"/>
    <property type="project" value="UniProtKB-KW"/>
</dbReference>
<dbReference type="GO" id="GO:0046718">
    <property type="term" value="P:symbiont entry into host cell"/>
    <property type="evidence" value="ECO:0007669"/>
    <property type="project" value="UniProtKB-KW"/>
</dbReference>
<dbReference type="Gene3D" id="6.10.250.2700">
    <property type="match status" value="1"/>
</dbReference>
<dbReference type="InterPro" id="IPR006777">
    <property type="entry name" value="Microvir_H"/>
</dbReference>
<dbReference type="Pfam" id="PF04687">
    <property type="entry name" value="Microvir_H"/>
    <property type="match status" value="1"/>
</dbReference>
<dbReference type="PIRSF" id="PIRSF004160">
    <property type="entry name" value="Microvir_H"/>
    <property type="match status" value="1"/>
</dbReference>
<organism>
    <name type="scientific">Enterobacteria phage phiK</name>
    <name type="common">Bacteriophage phi-K</name>
    <dbReference type="NCBI Taxonomy" id="10848"/>
    <lineage>
        <taxon>Viruses</taxon>
        <taxon>Monodnaviria</taxon>
        <taxon>Sangervirae</taxon>
        <taxon>Phixviricota</taxon>
        <taxon>Malgrandaviricetes</taxon>
        <taxon>Petitvirales</taxon>
        <taxon>Microviridae</taxon>
        <taxon>Bullavirinae</taxon>
        <taxon>Alphatrevirus</taxon>
    </lineage>
</organism>
<keyword id="KW-0167">Capsid protein</keyword>
<keyword id="KW-1171">Viral genome ejection through host cell envelope</keyword>
<keyword id="KW-1162">Viral penetration into host cytoplasm</keyword>
<keyword id="KW-0946">Virion</keyword>
<keyword id="KW-1160">Virus entry into host cell</keyword>
<comment type="function">
    <text>Minor spike component of the viral shell. Involved in the ejection of the phage DNA in the host and is injected with the DNA in the periplasmic space of the host. Involved in the determination of the phage host-range.</text>
</comment>
<comment type="subunit">
    <text>The virion is composed of 60 copies each of the F, G, and J proteins, and 12 copies of the H protein. There are 12 spikes which are each composed of 5 G and one H proteins.</text>
</comment>
<comment type="subcellular location">
    <subcellularLocation>
        <location evidence="1">Virion</location>
    </subcellularLocation>
</comment>
<comment type="miscellaneous">
    <text>Phi KhT, a host-range mutant of phi K, can grow on E.coli C and B, besides K12, and is more thermosensitive than the parental phage phi K.</text>
</comment>
<name>VGH_BPPHK</name>
<gene>
    <name type="primary">H</name>
</gene>
<evidence type="ECO:0000305" key="1"/>
<protein>
    <recommendedName>
        <fullName>Minor spike protein</fullName>
    </recommendedName>
    <alternativeName>
        <fullName>H protein</fullName>
    </alternativeName>
    <alternativeName>
        <fullName>Pilot protein</fullName>
    </alternativeName>
</protein>
<feature type="chain" id="PRO_0000164900" description="Minor spike protein">
    <location>
        <begin position="1"/>
        <end position="332"/>
    </location>
</feature>
<feature type="sequence variant" description="In phi KhT mutant.">
    <original>V</original>
    <variation>A</variation>
    <location>
        <position position="67"/>
    </location>
</feature>
<accession>P03649</accession>
<proteinExistence type="predicted"/>
<sequence length="332" mass="35110">MLGSIIGGIGSSLLGGIASGGISSLLNKMFSKMPEHAASSAGLTNGQGTIGMDTDAGIQSAIQGSNVPPAGQLPASNTSGVMADAGNMIRNAGRALLDGTIQAGSDKVKEALIDKLVGGNDAKDRGKATRDYLAAAFPELNPWERAGAGASTAGLESSAQNQQKEMLKMQLDNQKDIAKMQMNNNLQIAGIQSATSRQNTKDSVYAQNEMLQYNQRESQARVASILANTDLTTKQATHEIMRMALTRAQETGQHLTNSQIMALEKKVYAEIGKIHQDTQNSRYGSSQVTAAAKDVTNMITDASSGLADWASQQWDSFFKDGKSDGIPLNTRK</sequence>
<organismHost>
    <name type="scientific">Escherichia coli</name>
    <dbReference type="NCBI Taxonomy" id="562"/>
</organismHost>